<proteinExistence type="inferred from homology"/>
<gene>
    <name type="primary">GBA1</name>
    <name evidence="2" type="synonym">GBA</name>
</gene>
<reference key="1">
    <citation type="journal article" date="2004" name="Comp. Biochem. Physiol.">
        <title>Comparative and genetic analysis of the porcine glucocerebrosidase (GBA) gene.</title>
        <authorList>
            <person name="Stratil A."/>
            <person name="Wagenknecht D."/>
            <person name="Van Poucke M."/>
            <person name="Kubickova S."/>
            <person name="Bartenschlager H."/>
            <person name="Musilova P."/>
            <person name="Rubes J."/>
            <person name="Geldermann H."/>
            <person name="Peelman L.J."/>
        </authorList>
    </citation>
    <scope>NUCLEOTIDE SEQUENCE [GENOMIC DNA]</scope>
</reference>
<name>GBA1_PIG</name>
<keyword id="KW-0153">Cholesterol metabolism</keyword>
<keyword id="KW-1015">Disulfide bond</keyword>
<keyword id="KW-0325">Glycoprotein</keyword>
<keyword id="KW-0326">Glycosidase</keyword>
<keyword id="KW-0328">Glycosyltransferase</keyword>
<keyword id="KW-0378">Hydrolase</keyword>
<keyword id="KW-0443">Lipid metabolism</keyword>
<keyword id="KW-0458">Lysosome</keyword>
<keyword id="KW-0472">Membrane</keyword>
<keyword id="KW-1185">Reference proteome</keyword>
<keyword id="KW-0732">Signal</keyword>
<keyword id="KW-0746">Sphingolipid metabolism</keyword>
<keyword id="KW-0753">Steroid metabolism</keyword>
<keyword id="KW-1207">Sterol metabolism</keyword>
<keyword id="KW-0808">Transferase</keyword>
<comment type="function">
    <text evidence="2">Glucosylceramidase that catalyzes, within the lysosomal compartment, the hydrolysis of glucosylceramides/GlcCers (such as beta-D-glucosyl-(1&lt;-&gt;1')-N-acylsphing-4-enine) into free ceramides (such as N-acylsphing-4-enine) and glucose. Plays a central role in the degradation of complex lipids and the turnover of cellular membranes. Through the production of ceramides, participates in the PKC-activated salvage pathway of ceramide formation. Catalyzes the glucosylation of cholesterol, through a transglucosylation reaction where glucose is transferred from GlcCer to cholesterol. GlcCer containing mono-unsaturated fatty acids (such as beta-D-glucosyl-N-(9Z-octadecenoyl)-sphing-4-enine) are preferred as glucose donors for cholesterol glucosylation when compared with GlcCer containing same chain length of saturated fatty acids (such as beta-D-glucosyl-N-octadecanoyl-sphing-4-enine). Under specific conditions, may alternatively catalyze the reverse reaction, transferring glucose from cholesteryl 3-beta-D-glucoside to ceramide. Can also hydrolyze cholesteryl 3-beta-D-glucoside producing glucose and cholesterol. Catalyzes the hydrolysis of galactosylceramides/GalCers (such as beta-D-galactosyl-(1&lt;-&gt;1')-N-acylsphing-4-enine), as well as the transfer of galactose between GalCers and cholesterol in vitro, but with lower activity than with GlcCers. Contrary to GlcCer and GalCer, xylosylceramide/XylCer (such as beta-D-xyosyl-(1&lt;-&gt;1')-N-acylsphing-4-enine) is not a good substrate for hydrolysis, however it is a good xylose donor for transxylosylation activity to form cholesteryl 3-beta-D-xyloside.</text>
</comment>
<comment type="catalytic activity">
    <reaction evidence="2">
        <text>a beta-D-glucosyl-(1&lt;-&gt;1')-N-acylsphing-4-enine + H2O = an N-acylsphing-4-enine + D-glucose</text>
        <dbReference type="Rhea" id="RHEA:13269"/>
        <dbReference type="ChEBI" id="CHEBI:4167"/>
        <dbReference type="ChEBI" id="CHEBI:15377"/>
        <dbReference type="ChEBI" id="CHEBI:22801"/>
        <dbReference type="ChEBI" id="CHEBI:52639"/>
        <dbReference type="EC" id="3.2.1.45"/>
    </reaction>
    <physiologicalReaction direction="left-to-right" evidence="2">
        <dbReference type="Rhea" id="RHEA:13270"/>
    </physiologicalReaction>
</comment>
<comment type="catalytic activity">
    <reaction evidence="2">
        <text>a beta-D-galactosyl-(1&lt;-&gt;1')-N-acylsphing-4-enine + H2O = an N-acylsphing-4-enine + D-galactose</text>
        <dbReference type="Rhea" id="RHEA:14297"/>
        <dbReference type="ChEBI" id="CHEBI:4139"/>
        <dbReference type="ChEBI" id="CHEBI:15377"/>
        <dbReference type="ChEBI" id="CHEBI:18390"/>
        <dbReference type="ChEBI" id="CHEBI:52639"/>
        <dbReference type="EC" id="3.2.1.46"/>
    </reaction>
    <physiologicalReaction direction="left-to-right" evidence="2">
        <dbReference type="Rhea" id="RHEA:14298"/>
    </physiologicalReaction>
</comment>
<comment type="catalytic activity">
    <reaction evidence="2">
        <text>cholesteryl 3-beta-D-glucoside + H2O = cholesterol + D-glucose</text>
        <dbReference type="Rhea" id="RHEA:11956"/>
        <dbReference type="ChEBI" id="CHEBI:4167"/>
        <dbReference type="ChEBI" id="CHEBI:15377"/>
        <dbReference type="ChEBI" id="CHEBI:16113"/>
        <dbReference type="ChEBI" id="CHEBI:17495"/>
    </reaction>
    <physiologicalReaction direction="left-to-right" evidence="2">
        <dbReference type="Rhea" id="RHEA:11957"/>
    </physiologicalReaction>
</comment>
<comment type="catalytic activity">
    <reaction evidence="2">
        <text>a beta-D-glucosyl-(1&lt;-&gt;1')-N-acylsphing-4-enine + cholesterol = cholesteryl 3-beta-D-glucoside + an N-acylsphing-4-enine</text>
        <dbReference type="Rhea" id="RHEA:58264"/>
        <dbReference type="ChEBI" id="CHEBI:16113"/>
        <dbReference type="ChEBI" id="CHEBI:17495"/>
        <dbReference type="ChEBI" id="CHEBI:22801"/>
        <dbReference type="ChEBI" id="CHEBI:52639"/>
    </reaction>
    <physiologicalReaction direction="left-to-right" evidence="2">
        <dbReference type="Rhea" id="RHEA:58265"/>
    </physiologicalReaction>
    <physiologicalReaction direction="right-to-left" evidence="2">
        <dbReference type="Rhea" id="RHEA:58266"/>
    </physiologicalReaction>
</comment>
<comment type="catalytic activity">
    <reaction evidence="2">
        <text>beta-D-glucosyl-N-(9Z-octadecenoyl)-sphing-4E-enine + cholesterol = N-(9Z-octadecenoyl)-sphing-4-enine + cholesteryl 3-beta-D-glucoside</text>
        <dbReference type="Rhea" id="RHEA:58324"/>
        <dbReference type="ChEBI" id="CHEBI:16113"/>
        <dbReference type="ChEBI" id="CHEBI:17495"/>
        <dbReference type="ChEBI" id="CHEBI:77996"/>
        <dbReference type="ChEBI" id="CHEBI:139140"/>
    </reaction>
    <physiologicalReaction direction="left-to-right" evidence="2">
        <dbReference type="Rhea" id="RHEA:58325"/>
    </physiologicalReaction>
    <physiologicalReaction direction="right-to-left" evidence="2">
        <dbReference type="Rhea" id="RHEA:58326"/>
    </physiologicalReaction>
</comment>
<comment type="catalytic activity">
    <reaction evidence="2">
        <text>beta-D-glucosyl-N-octanoylsphing-4E-enine + cholesterol = N-octanoylsphing-4-enine + cholesteryl 3-beta-D-glucoside</text>
        <dbReference type="Rhea" id="RHEA:70303"/>
        <dbReference type="ChEBI" id="CHEBI:16113"/>
        <dbReference type="ChEBI" id="CHEBI:17495"/>
        <dbReference type="ChEBI" id="CHEBI:45815"/>
        <dbReference type="ChEBI" id="CHEBI:65222"/>
    </reaction>
    <physiologicalReaction direction="left-to-right" evidence="2">
        <dbReference type="Rhea" id="RHEA:70304"/>
    </physiologicalReaction>
    <physiologicalReaction direction="right-to-left" evidence="2">
        <dbReference type="Rhea" id="RHEA:70305"/>
    </physiologicalReaction>
</comment>
<comment type="catalytic activity">
    <reaction evidence="2">
        <text>beta-D-glucosyl-N-dodecanoylsphing-4-enine + cholesterol = N-dodecanoylsphing-4-enine + cholesteryl 3-beta-D-glucoside</text>
        <dbReference type="Rhea" id="RHEA:70307"/>
        <dbReference type="ChEBI" id="CHEBI:16113"/>
        <dbReference type="ChEBI" id="CHEBI:17495"/>
        <dbReference type="ChEBI" id="CHEBI:72956"/>
        <dbReference type="ChEBI" id="CHEBI:76297"/>
    </reaction>
    <physiologicalReaction direction="left-to-right" evidence="2">
        <dbReference type="Rhea" id="RHEA:70308"/>
    </physiologicalReaction>
    <physiologicalReaction direction="right-to-left" evidence="2">
        <dbReference type="Rhea" id="RHEA:70309"/>
    </physiologicalReaction>
</comment>
<comment type="catalytic activity">
    <reaction evidence="2">
        <text>beta-D-glucosyl-(1&lt;-&gt;1)-N-octadecanoylsphing-4-enine + cholesterol = N-octadecanoylsphing-4-enine + cholesteryl 3-beta-D-glucoside</text>
        <dbReference type="Rhea" id="RHEA:70311"/>
        <dbReference type="ChEBI" id="CHEBI:16113"/>
        <dbReference type="ChEBI" id="CHEBI:17495"/>
        <dbReference type="ChEBI" id="CHEBI:72961"/>
        <dbReference type="ChEBI" id="CHEBI:84719"/>
    </reaction>
    <physiologicalReaction direction="left-to-right" evidence="2">
        <dbReference type="Rhea" id="RHEA:70312"/>
    </physiologicalReaction>
    <physiologicalReaction direction="right-to-left" evidence="2">
        <dbReference type="Rhea" id="RHEA:70313"/>
    </physiologicalReaction>
</comment>
<comment type="catalytic activity">
    <reaction evidence="2">
        <text>beta-D-glucosyl-(1&lt;-&gt;1')-N-(15Z-tetracosenoyl)-sphing-4-enine + cholesterol = N-(15Z-tetracosenoyl)-sphing-4-enine + cholesteryl 3-beta-D-glucoside</text>
        <dbReference type="Rhea" id="RHEA:70315"/>
        <dbReference type="ChEBI" id="CHEBI:16113"/>
        <dbReference type="ChEBI" id="CHEBI:17495"/>
        <dbReference type="ChEBI" id="CHEBI:74450"/>
        <dbReference type="ChEBI" id="CHEBI:76302"/>
    </reaction>
    <physiologicalReaction direction="left-to-right" evidence="2">
        <dbReference type="Rhea" id="RHEA:70316"/>
    </physiologicalReaction>
    <physiologicalReaction direction="right-to-left" evidence="2">
        <dbReference type="Rhea" id="RHEA:70317"/>
    </physiologicalReaction>
</comment>
<comment type="catalytic activity">
    <reaction evidence="2">
        <text>a beta-D-galactosyl-(1&lt;-&gt;1')-N-acylsphing-4-enine + cholesterol = cholesteryl 3-beta-D-galactoside + an N-acylsphing-4-enine</text>
        <dbReference type="Rhea" id="RHEA:70235"/>
        <dbReference type="ChEBI" id="CHEBI:16113"/>
        <dbReference type="ChEBI" id="CHEBI:18390"/>
        <dbReference type="ChEBI" id="CHEBI:52639"/>
        <dbReference type="ChEBI" id="CHEBI:189066"/>
    </reaction>
    <physiologicalReaction direction="left-to-right" evidence="2">
        <dbReference type="Rhea" id="RHEA:70236"/>
    </physiologicalReaction>
    <physiologicalReaction direction="right-to-left" evidence="2">
        <dbReference type="Rhea" id="RHEA:70237"/>
    </physiologicalReaction>
</comment>
<comment type="catalytic activity">
    <reaction evidence="2">
        <text>1-(beta-D-galactosyl)-N-dodecanoylsphing-4-enine + cholesterol = cholesteryl 3-beta-D-galactoside + N-dodecanoylsphing-4-enine</text>
        <dbReference type="Rhea" id="RHEA:70255"/>
        <dbReference type="ChEBI" id="CHEBI:16113"/>
        <dbReference type="ChEBI" id="CHEBI:72956"/>
        <dbReference type="ChEBI" id="CHEBI:73432"/>
        <dbReference type="ChEBI" id="CHEBI:189066"/>
    </reaction>
    <physiologicalReaction direction="left-to-right" evidence="2">
        <dbReference type="Rhea" id="RHEA:70256"/>
    </physiologicalReaction>
    <physiologicalReaction direction="right-to-left" evidence="2">
        <dbReference type="Rhea" id="RHEA:70257"/>
    </physiologicalReaction>
</comment>
<comment type="catalytic activity">
    <reaction evidence="2">
        <text>a beta-D-xylosyl-(1&lt;-&gt;1')-N-acylsphing-4-enine + cholesterol = cholesteryl 3-beta-D-xyloside + an N-acylsphing-4-enine</text>
        <dbReference type="Rhea" id="RHEA:70239"/>
        <dbReference type="ChEBI" id="CHEBI:16113"/>
        <dbReference type="ChEBI" id="CHEBI:52639"/>
        <dbReference type="ChEBI" id="CHEBI:189067"/>
        <dbReference type="ChEBI" id="CHEBI:189068"/>
    </reaction>
    <physiologicalReaction direction="left-to-right" evidence="2">
        <dbReference type="Rhea" id="RHEA:70240"/>
    </physiologicalReaction>
</comment>
<comment type="catalytic activity">
    <reaction evidence="2">
        <text>beta-D-xylosyl-(1&lt;-&gt;1')-N-(9Z-octadecenoyl)-sphing-4-enine + cholesterol = cholesteryl 3-beta-D-xyloside + N-(9Z-octadecenoyl)-sphing-4-enine</text>
        <dbReference type="Rhea" id="RHEA:70251"/>
        <dbReference type="ChEBI" id="CHEBI:16113"/>
        <dbReference type="ChEBI" id="CHEBI:77996"/>
        <dbReference type="ChEBI" id="CHEBI:189067"/>
        <dbReference type="ChEBI" id="CHEBI:189081"/>
    </reaction>
    <physiologicalReaction direction="left-to-right" evidence="2">
        <dbReference type="Rhea" id="RHEA:70252"/>
    </physiologicalReaction>
</comment>
<comment type="pathway">
    <text evidence="2">Steroid metabolism; cholesterol metabolism.</text>
</comment>
<comment type="pathway">
    <text evidence="2">Sphingolipid metabolism.</text>
</comment>
<comment type="subunit">
    <text evidence="2">Interacts with saposin-C. Interacts with SCARB2. Interacts with TCP1. Interacts with GRN; this interaction prevents aggregation of GBA1-SCARB2 complex via interaction with HSPA1A upon stress (By similarity).</text>
</comment>
<comment type="subcellular location">
    <subcellularLocation>
        <location evidence="2">Lysosome membrane</location>
        <topology evidence="2">Peripheral membrane protein</topology>
        <orientation evidence="2">Lumenal side</orientation>
    </subcellularLocation>
    <text evidence="2">Interaction with saposin-C promotes membrane association. Targeting to lysosomes occurs through an alternative MPR-independent mechanism via SCARB2.</text>
</comment>
<comment type="similarity">
    <text evidence="4">Belongs to the glycosyl hydrolase 30 family.</text>
</comment>
<sequence length="536" mass="59874">MELSSPSREECPRPQGRVGIMAASLMGLLLLQAASWASGARPCSPKSFGYSSVVCVCNATYCDSLDPLTLPDPGTFSRFESTRSGRRMELSLGTFQANRTSKGLLLTLQPDQKFQKVKGFGGAMTDAAALNILALSPQARNLLLKSYFSEEGIEYNIIRVPMASCDFSIRIYTYADTPDDFQLLNFSLPEEDVKLKIPLIHQALKMAQRPVSLFASPWTSPTWLKTNGAVNGKGTLKGHPGDRYHQTWAKYFVKFLDAYAEHNLHFWAVTAENEPSAGLFTGYPFQCLGFTPEHQRDFIARDPGPTLANSTHRNVRLLMLDDQRLLLPHWAQVVLADPEAAKYVHGIAVHWYLDFLAPAKATLGETHRLFPNTMLFASEACVGSKFWEQSVRLGSWDRGVQYSHSIITNLLYHVVGWTDWNLALNPEGGPNWVRNFVDSPIIVDISKDTFYKQPMFYHLGHFSKFIPEGSQRVGLAASEKNNLDTVALLRPDGSAVVVVLNRSSKDVPLTIKDPALGFLETISPSYSIHTYLWHRK</sequence>
<feature type="signal peptide" evidence="1">
    <location>
        <begin position="1"/>
        <end position="39"/>
    </location>
</feature>
<feature type="chain" id="PRO_5000071459" description="Lysosomal acid glucosylceramidase">
    <location>
        <begin position="40"/>
        <end position="536"/>
    </location>
</feature>
<feature type="active site" description="Proton donor" evidence="1">
    <location>
        <position position="274"/>
    </location>
</feature>
<feature type="active site" description="Nucleophile" evidence="1">
    <location>
        <position position="379"/>
    </location>
</feature>
<feature type="glycosylation site" description="N-linked (GlcNAc...) asparagine" evidence="3">
    <location>
        <position position="58"/>
    </location>
</feature>
<feature type="glycosylation site" description="N-linked (GlcNAc...) asparagine" evidence="3">
    <location>
        <position position="98"/>
    </location>
</feature>
<feature type="glycosylation site" description="N-linked (GlcNAc...) asparagine" evidence="3">
    <location>
        <position position="185"/>
    </location>
</feature>
<feature type="glycosylation site" description="N-linked (GlcNAc...) asparagine" evidence="3">
    <location>
        <position position="309"/>
    </location>
</feature>
<feature type="glycosylation site" description="N-linked (GlcNAc...) asparagine" evidence="3">
    <location>
        <position position="501"/>
    </location>
</feature>
<feature type="disulfide bond" evidence="2">
    <location>
        <begin position="43"/>
        <end position="55"/>
    </location>
</feature>
<feature type="disulfide bond" evidence="2">
    <location>
        <begin position="57"/>
        <end position="62"/>
    </location>
</feature>
<protein>
    <recommendedName>
        <fullName evidence="4">Lysosomal acid glucosylceramidase</fullName>
        <ecNumber evidence="2">3.2.1.45</ecNumber>
    </recommendedName>
    <alternativeName>
        <fullName>Acid beta-glucosidase</fullName>
    </alternativeName>
    <alternativeName>
        <fullName>Beta-glucocerebrosidase</fullName>
    </alternativeName>
    <alternativeName>
        <fullName evidence="2">Cholesterol glucosyltransferase</fullName>
        <shortName evidence="2">SGTase</shortName>
        <ecNumber evidence="2">2.4.1.-</ecNumber>
    </alternativeName>
    <alternativeName>
        <fullName evidence="2">Cholesteryl-beta-glucosidase</fullName>
        <ecNumber evidence="2">3.2.1.-</ecNumber>
    </alternativeName>
    <alternativeName>
        <fullName>D-glucosyl-N-acylsphingosine glucohydrolase</fullName>
    </alternativeName>
    <alternativeName>
        <fullName evidence="4">Lysosomal cholesterol glycosyltransferase</fullName>
    </alternativeName>
    <alternativeName>
        <fullName evidence="4">Lysosomal galactosylceramidase</fullName>
        <ecNumber evidence="2">3.2.1.46</ecNumber>
    </alternativeName>
    <alternativeName>
        <fullName evidence="4">Lysosomal glycosylceramidase</fullName>
    </alternativeName>
</protein>
<evidence type="ECO:0000250" key="1"/>
<evidence type="ECO:0000250" key="2">
    <source>
        <dbReference type="UniProtKB" id="P04062"/>
    </source>
</evidence>
<evidence type="ECO:0000255" key="3"/>
<evidence type="ECO:0000305" key="4"/>
<organism>
    <name type="scientific">Sus scrofa</name>
    <name type="common">Pig</name>
    <dbReference type="NCBI Taxonomy" id="9823"/>
    <lineage>
        <taxon>Eukaryota</taxon>
        <taxon>Metazoa</taxon>
        <taxon>Chordata</taxon>
        <taxon>Craniata</taxon>
        <taxon>Vertebrata</taxon>
        <taxon>Euteleostomi</taxon>
        <taxon>Mammalia</taxon>
        <taxon>Eutheria</taxon>
        <taxon>Laurasiatheria</taxon>
        <taxon>Artiodactyla</taxon>
        <taxon>Suina</taxon>
        <taxon>Suidae</taxon>
        <taxon>Sus</taxon>
    </lineage>
</organism>
<dbReference type="EC" id="3.2.1.45" evidence="2"/>
<dbReference type="EC" id="2.4.1.-" evidence="2"/>
<dbReference type="EC" id="3.2.1.-" evidence="2"/>
<dbReference type="EC" id="3.2.1.46" evidence="2"/>
<dbReference type="EMBL" id="AJ575649">
    <property type="protein sequence ID" value="CAE06498.1"/>
    <property type="molecule type" value="Genomic_DNA"/>
</dbReference>
<dbReference type="RefSeq" id="NP_001005730.1">
    <property type="nucleotide sequence ID" value="NM_001005730.1"/>
</dbReference>
<dbReference type="SMR" id="Q70KH2"/>
<dbReference type="FunCoup" id="Q70KH2">
    <property type="interactions" value="222"/>
</dbReference>
<dbReference type="STRING" id="9823.ENSSSCP00000006950"/>
<dbReference type="CAZy" id="GH30">
    <property type="family name" value="Glycoside Hydrolase Family 30"/>
</dbReference>
<dbReference type="GlyCosmos" id="Q70KH2">
    <property type="glycosylation" value="5 sites, No reported glycans"/>
</dbReference>
<dbReference type="GlyGen" id="Q70KH2">
    <property type="glycosylation" value="6 sites"/>
</dbReference>
<dbReference type="PaxDb" id="9823-ENSSSCP00000006950"/>
<dbReference type="PeptideAtlas" id="Q70KH2"/>
<dbReference type="GeneID" id="449572"/>
<dbReference type="KEGG" id="ssc:449572"/>
<dbReference type="CTD" id="2629"/>
<dbReference type="eggNOG" id="KOG2566">
    <property type="taxonomic scope" value="Eukaryota"/>
</dbReference>
<dbReference type="InParanoid" id="Q70KH2"/>
<dbReference type="OrthoDB" id="2160638at2759"/>
<dbReference type="BRENDA" id="3.2.1.45">
    <property type="organism ID" value="6170"/>
</dbReference>
<dbReference type="UniPathway" id="UPA00296"/>
<dbReference type="Proteomes" id="UP000008227">
    <property type="component" value="Unplaced"/>
</dbReference>
<dbReference type="Proteomes" id="UP000314985">
    <property type="component" value="Unplaced"/>
</dbReference>
<dbReference type="Proteomes" id="UP000694570">
    <property type="component" value="Unplaced"/>
</dbReference>
<dbReference type="Proteomes" id="UP000694571">
    <property type="component" value="Unplaced"/>
</dbReference>
<dbReference type="Proteomes" id="UP000694720">
    <property type="component" value="Unplaced"/>
</dbReference>
<dbReference type="Proteomes" id="UP000694722">
    <property type="component" value="Unplaced"/>
</dbReference>
<dbReference type="Proteomes" id="UP000694723">
    <property type="component" value="Unplaced"/>
</dbReference>
<dbReference type="Proteomes" id="UP000694724">
    <property type="component" value="Unplaced"/>
</dbReference>
<dbReference type="Proteomes" id="UP000694725">
    <property type="component" value="Unplaced"/>
</dbReference>
<dbReference type="Proteomes" id="UP000694726">
    <property type="component" value="Unplaced"/>
</dbReference>
<dbReference type="Proteomes" id="UP000694727">
    <property type="component" value="Unplaced"/>
</dbReference>
<dbReference type="Proteomes" id="UP000694728">
    <property type="component" value="Unplaced"/>
</dbReference>
<dbReference type="GO" id="GO:0005783">
    <property type="term" value="C:endoplasmic reticulum"/>
    <property type="evidence" value="ECO:0000250"/>
    <property type="project" value="UniProtKB"/>
</dbReference>
<dbReference type="GO" id="GO:0005794">
    <property type="term" value="C:Golgi apparatus"/>
    <property type="evidence" value="ECO:0000250"/>
    <property type="project" value="UniProtKB"/>
</dbReference>
<dbReference type="GO" id="GO:0005765">
    <property type="term" value="C:lysosomal membrane"/>
    <property type="evidence" value="ECO:0000250"/>
    <property type="project" value="UniProtKB"/>
</dbReference>
<dbReference type="GO" id="GO:0005764">
    <property type="term" value="C:lysosome"/>
    <property type="evidence" value="ECO:0000250"/>
    <property type="project" value="UniProtKB"/>
</dbReference>
<dbReference type="GO" id="GO:0005802">
    <property type="term" value="C:trans-Golgi network"/>
    <property type="evidence" value="ECO:0000250"/>
    <property type="project" value="UniProtKB"/>
</dbReference>
<dbReference type="GO" id="GO:0004336">
    <property type="term" value="F:galactosylceramidase activity"/>
    <property type="evidence" value="ECO:0007669"/>
    <property type="project" value="RHEA"/>
</dbReference>
<dbReference type="GO" id="GO:0004348">
    <property type="term" value="F:glucosylceramidase activity"/>
    <property type="evidence" value="ECO:0000250"/>
    <property type="project" value="UniProtKB"/>
</dbReference>
<dbReference type="GO" id="GO:0046527">
    <property type="term" value="F:glucosyltransferase activity"/>
    <property type="evidence" value="ECO:0000250"/>
    <property type="project" value="UniProtKB"/>
</dbReference>
<dbReference type="GO" id="GO:0050295">
    <property type="term" value="F:steryl-beta-glucosidase activity"/>
    <property type="evidence" value="ECO:0000250"/>
    <property type="project" value="UniProtKB"/>
</dbReference>
<dbReference type="GO" id="GO:0006914">
    <property type="term" value="P:autophagy"/>
    <property type="evidence" value="ECO:0000250"/>
    <property type="project" value="UniProtKB"/>
</dbReference>
<dbReference type="GO" id="GO:0008203">
    <property type="term" value="P:cholesterol metabolic process"/>
    <property type="evidence" value="ECO:0000250"/>
    <property type="project" value="UniProtKB"/>
</dbReference>
<dbReference type="GO" id="GO:0006680">
    <property type="term" value="P:glucosylceramide catabolic process"/>
    <property type="evidence" value="ECO:0000250"/>
    <property type="project" value="UniProtKB"/>
</dbReference>
<dbReference type="GO" id="GO:0030259">
    <property type="term" value="P:lipid glycosylation"/>
    <property type="evidence" value="ECO:0000250"/>
    <property type="project" value="UniProtKB"/>
</dbReference>
<dbReference type="GO" id="GO:0007040">
    <property type="term" value="P:lysosome organization"/>
    <property type="evidence" value="ECO:0000250"/>
    <property type="project" value="UniProtKB"/>
</dbReference>
<dbReference type="GO" id="GO:0032006">
    <property type="term" value="P:regulation of TOR signaling"/>
    <property type="evidence" value="ECO:0000250"/>
    <property type="project" value="UniProtKB"/>
</dbReference>
<dbReference type="FunFam" id="3.20.20.80:FF:000030">
    <property type="entry name" value="Lysosomal acid glucosylceramidase"/>
    <property type="match status" value="1"/>
</dbReference>
<dbReference type="Gene3D" id="3.20.20.80">
    <property type="entry name" value="Glycosidases"/>
    <property type="match status" value="1"/>
</dbReference>
<dbReference type="InterPro" id="IPR033452">
    <property type="entry name" value="GH30_C"/>
</dbReference>
<dbReference type="InterPro" id="IPR001139">
    <property type="entry name" value="Glyco_hydro_30"/>
</dbReference>
<dbReference type="InterPro" id="IPR033453">
    <property type="entry name" value="Glyco_hydro_30_TIM-barrel"/>
</dbReference>
<dbReference type="InterPro" id="IPR017853">
    <property type="entry name" value="Glycoside_hydrolase_SF"/>
</dbReference>
<dbReference type="PANTHER" id="PTHR11069">
    <property type="entry name" value="GLUCOSYLCERAMIDASE"/>
    <property type="match status" value="1"/>
</dbReference>
<dbReference type="PANTHER" id="PTHR11069:SF23">
    <property type="entry name" value="LYSOSOMAL ACID GLUCOSYLCERAMIDASE"/>
    <property type="match status" value="1"/>
</dbReference>
<dbReference type="Pfam" id="PF02055">
    <property type="entry name" value="Glyco_hydro_30"/>
    <property type="match status" value="1"/>
</dbReference>
<dbReference type="Pfam" id="PF17189">
    <property type="entry name" value="Glyco_hydro_30C"/>
    <property type="match status" value="1"/>
</dbReference>
<dbReference type="PRINTS" id="PR00843">
    <property type="entry name" value="GLHYDRLASE30"/>
</dbReference>
<dbReference type="SUPFAM" id="SSF51445">
    <property type="entry name" value="(Trans)glycosidases"/>
    <property type="match status" value="1"/>
</dbReference>
<dbReference type="SUPFAM" id="SSF51011">
    <property type="entry name" value="Glycosyl hydrolase domain"/>
    <property type="match status" value="2"/>
</dbReference>
<accession>Q70KH2</accession>